<dbReference type="EMBL" id="LT708304">
    <property type="protein sequence ID" value="SIU01550.1"/>
    <property type="molecule type" value="Genomic_DNA"/>
</dbReference>
<dbReference type="RefSeq" id="NP_856574.1">
    <property type="nucleotide sequence ID" value="NC_002945.3"/>
</dbReference>
<dbReference type="RefSeq" id="WP_003414720.1">
    <property type="nucleotide sequence ID" value="NC_002945.4"/>
</dbReference>
<dbReference type="SMR" id="P65305"/>
<dbReference type="KEGG" id="mbo:BQ2027_MB2929"/>
<dbReference type="PATRIC" id="fig|233413.5.peg.3215"/>
<dbReference type="Proteomes" id="UP000001419">
    <property type="component" value="Chromosome"/>
</dbReference>
<dbReference type="GO" id="GO:0005886">
    <property type="term" value="C:plasma membrane"/>
    <property type="evidence" value="ECO:0007669"/>
    <property type="project" value="UniProtKB-SubCell"/>
</dbReference>
<dbReference type="GO" id="GO:0008800">
    <property type="term" value="F:beta-lactamase activity"/>
    <property type="evidence" value="ECO:0007669"/>
    <property type="project" value="InterPro"/>
</dbReference>
<dbReference type="GO" id="GO:0030655">
    <property type="term" value="P:beta-lactam antibiotic catabolic process"/>
    <property type="evidence" value="ECO:0007669"/>
    <property type="project" value="InterPro"/>
</dbReference>
<dbReference type="GO" id="GO:0046677">
    <property type="term" value="P:response to antibiotic"/>
    <property type="evidence" value="ECO:0007669"/>
    <property type="project" value="InterPro"/>
</dbReference>
<dbReference type="Gene3D" id="3.40.710.10">
    <property type="entry name" value="DD-peptidase/beta-lactamase superfamily"/>
    <property type="match status" value="1"/>
</dbReference>
<dbReference type="InterPro" id="IPR012338">
    <property type="entry name" value="Beta-lactam/transpept-like"/>
</dbReference>
<dbReference type="InterPro" id="IPR000871">
    <property type="entry name" value="Beta-lactam_class-A"/>
</dbReference>
<dbReference type="PANTHER" id="PTHR35333">
    <property type="entry name" value="BETA-LACTAMASE"/>
    <property type="match status" value="1"/>
</dbReference>
<dbReference type="PANTHER" id="PTHR35333:SF3">
    <property type="entry name" value="BETA-LACTAMASE-TYPE TRANSPEPTIDASE FOLD CONTAINING PROTEIN"/>
    <property type="match status" value="1"/>
</dbReference>
<dbReference type="SUPFAM" id="SSF56601">
    <property type="entry name" value="beta-lactamase/transpeptidase-like"/>
    <property type="match status" value="1"/>
</dbReference>
<dbReference type="PROSITE" id="PS51257">
    <property type="entry name" value="PROKAR_LIPOPROTEIN"/>
    <property type="match status" value="1"/>
</dbReference>
<name>LPPW_MYCBO</name>
<comment type="subcellular location">
    <subcellularLocation>
        <location evidence="1">Cell membrane</location>
        <topology evidence="1">Lipid-anchor</topology>
    </subcellularLocation>
</comment>
<evidence type="ECO:0000255" key="1">
    <source>
        <dbReference type="PROSITE-ProRule" id="PRU00303"/>
    </source>
</evidence>
<organism>
    <name type="scientific">Mycobacterium bovis (strain ATCC BAA-935 / AF2122/97)</name>
    <dbReference type="NCBI Taxonomy" id="233413"/>
    <lineage>
        <taxon>Bacteria</taxon>
        <taxon>Bacillati</taxon>
        <taxon>Actinomycetota</taxon>
        <taxon>Actinomycetes</taxon>
        <taxon>Mycobacteriales</taxon>
        <taxon>Mycobacteriaceae</taxon>
        <taxon>Mycobacterium</taxon>
        <taxon>Mycobacterium tuberculosis complex</taxon>
    </lineage>
</organism>
<feature type="signal peptide" evidence="1">
    <location>
        <begin position="1"/>
        <end position="22"/>
    </location>
</feature>
<feature type="chain" id="PRO_0000018117" description="Putative lipoprotein LppW">
    <location>
        <begin position="23"/>
        <end position="314"/>
    </location>
</feature>
<feature type="lipid moiety-binding region" description="N-palmitoyl cysteine" evidence="1">
    <location>
        <position position="23"/>
    </location>
</feature>
<feature type="lipid moiety-binding region" description="S-diacylglycerol cysteine" evidence="1">
    <location>
        <position position="23"/>
    </location>
</feature>
<keyword id="KW-1003">Cell membrane</keyword>
<keyword id="KW-0449">Lipoprotein</keyword>
<keyword id="KW-0472">Membrane</keyword>
<keyword id="KW-0564">Palmitate</keyword>
<keyword id="KW-1185">Reference proteome</keyword>
<keyword id="KW-0732">Signal</keyword>
<proteinExistence type="inferred from homology"/>
<sequence>MRARPLTLLTALAAVTLVVVAGCEARVEAEAYSAADRISSRPQARPQPQPVELLLRAITPPRAPAASPNVGFGELPTRVRQATDEAAAMGATLSVAVLDRATGQLVSNGNTQIIATASVAKLFIADDLLLAEAEGKVTLSPEDHHALDVMLQSSDDGAAERFWSQDGGNAVVTQVARRYGLRSTAPPSDGRWWNTISSAPDLIRYYDMLLDGSGGLPLDRAAVIIADLAQSTPTGIDGYPQRFGIPDGLYAEPVAVKQGWMCCIGSSWMHLSTGVIGPERRYIMVIESLQPADDATARATITQAVRTMFPNGRI</sequence>
<gene>
    <name type="primary">lppW</name>
    <name type="ordered locus">BQ2027_MB2929</name>
</gene>
<protein>
    <recommendedName>
        <fullName>Putative lipoprotein LppW</fullName>
    </recommendedName>
</protein>
<reference key="1">
    <citation type="journal article" date="2003" name="Proc. Natl. Acad. Sci. U.S.A.">
        <title>The complete genome sequence of Mycobacterium bovis.</title>
        <authorList>
            <person name="Garnier T."/>
            <person name="Eiglmeier K."/>
            <person name="Camus J.-C."/>
            <person name="Medina N."/>
            <person name="Mansoor H."/>
            <person name="Pryor M."/>
            <person name="Duthoy S."/>
            <person name="Grondin S."/>
            <person name="Lacroix C."/>
            <person name="Monsempe C."/>
            <person name="Simon S."/>
            <person name="Harris B."/>
            <person name="Atkin R."/>
            <person name="Doggett J."/>
            <person name="Mayes R."/>
            <person name="Keating L."/>
            <person name="Wheeler P.R."/>
            <person name="Parkhill J."/>
            <person name="Barrell B.G."/>
            <person name="Cole S.T."/>
            <person name="Gordon S.V."/>
            <person name="Hewinson R.G."/>
        </authorList>
    </citation>
    <scope>NUCLEOTIDE SEQUENCE [LARGE SCALE GENOMIC DNA]</scope>
    <source>
        <strain>ATCC BAA-935 / AF2122/97</strain>
    </source>
</reference>
<reference key="2">
    <citation type="journal article" date="2017" name="Genome Announc.">
        <title>Updated reference genome sequence and annotation of Mycobacterium bovis AF2122/97.</title>
        <authorList>
            <person name="Malone K.M."/>
            <person name="Farrell D."/>
            <person name="Stuber T.P."/>
            <person name="Schubert O.T."/>
            <person name="Aebersold R."/>
            <person name="Robbe-Austerman S."/>
            <person name="Gordon S.V."/>
        </authorList>
    </citation>
    <scope>NUCLEOTIDE SEQUENCE [LARGE SCALE GENOMIC DNA]</scope>
    <scope>GENOME REANNOTATION</scope>
    <source>
        <strain>ATCC BAA-935 / AF2122/97</strain>
    </source>
</reference>
<accession>P65305</accession>
<accession>A0A1R3Y2J3</accession>
<accession>Q10823</accession>
<accession>X2BMR5</accession>